<evidence type="ECO:0000255" key="1">
    <source>
        <dbReference type="HAMAP-Rule" id="MF_04074"/>
    </source>
</evidence>
<keyword id="KW-0002">3D-structure</keyword>
<keyword id="KW-1074">Activation of host NF-kappa-B by virus</keyword>
<keyword id="KW-0010">Activator</keyword>
<keyword id="KW-0053">Apoptosis</keyword>
<keyword id="KW-1035">Host cytoplasm</keyword>
<keyword id="KW-1079">Host G2/M cell cycle arrest by virus</keyword>
<keyword id="KW-1045">Host mitochondrion</keyword>
<keyword id="KW-1048">Host nucleus</keyword>
<keyword id="KW-0945">Host-virus interaction</keyword>
<keyword id="KW-1121">Modulation of host cell cycle by virus</keyword>
<keyword id="KW-0804">Transcription</keyword>
<keyword id="KW-0805">Transcription regulation</keyword>
<organismHost>
    <name type="scientific">Homo sapiens</name>
    <name type="common">Human</name>
    <dbReference type="NCBI Taxonomy" id="9606"/>
</organismHost>
<organismHost>
    <name type="scientific">Pan troglodytes</name>
    <name type="common">Chimpanzee</name>
    <dbReference type="NCBI Taxonomy" id="9598"/>
</organismHost>
<protein>
    <recommendedName>
        <fullName evidence="1">Protein X</fullName>
    </recommendedName>
    <alternativeName>
        <fullName evidence="1">HBx</fullName>
    </alternativeName>
    <alternativeName>
        <fullName evidence="1">Peptide X</fullName>
    </alternativeName>
    <alternativeName>
        <fullName evidence="1">pX</fullName>
    </alternativeName>
</protein>
<proteinExistence type="evidence at protein level"/>
<organism>
    <name type="scientific">Hepatitis B virus genotype C subtype ad (isolate Japan/S-179/1988)</name>
    <name type="common">HBV-C</name>
    <dbReference type="NCBI Taxonomy" id="489468"/>
    <lineage>
        <taxon>Viruses</taxon>
        <taxon>Riboviria</taxon>
        <taxon>Pararnavirae</taxon>
        <taxon>Artverviricota</taxon>
        <taxon>Revtraviricetes</taxon>
        <taxon>Blubervirales</taxon>
        <taxon>Hepadnaviridae</taxon>
        <taxon>Orthohepadnavirus</taxon>
        <taxon>Hepatitis B virus</taxon>
        <taxon>hepatitis B virus genotype C</taxon>
    </lineage>
</organism>
<sequence length="145" mass="15629">MAARVCCQLDPARDVLCLRPVGAESRGRPVSGPFGALPSPSSSAVPADHGAHLSLRGLPVCAFSSAGPCALRFTSARRMETTVNAHQVLPKVLHKRTLGLSAMSTTDLEAYFKDCVFKDWEELGEEIRLKVFVLGGCRHNFFTSA</sequence>
<dbReference type="EMBL" id="V00867">
    <property type="status" value="NOT_ANNOTATED_CDS"/>
    <property type="molecule type" value="Genomic_DNA"/>
</dbReference>
<dbReference type="PDB" id="8WLS">
    <property type="method" value="NMR"/>
    <property type="chains" value="B=101-120"/>
</dbReference>
<dbReference type="PDBsum" id="8WLS"/>
<dbReference type="SMR" id="P0C689"/>
<dbReference type="GO" id="GO:0033650">
    <property type="term" value="C:host cell mitochondrion"/>
    <property type="evidence" value="ECO:0007669"/>
    <property type="project" value="UniProtKB-SubCell"/>
</dbReference>
<dbReference type="GO" id="GO:0042025">
    <property type="term" value="C:host cell nucleus"/>
    <property type="evidence" value="ECO:0007669"/>
    <property type="project" value="UniProtKB-SubCell"/>
</dbReference>
<dbReference type="GO" id="GO:0006351">
    <property type="term" value="P:DNA-templated transcription"/>
    <property type="evidence" value="ECO:0007669"/>
    <property type="project" value="UniProtKB-UniRule"/>
</dbReference>
<dbReference type="GO" id="GO:0085033">
    <property type="term" value="P:symbiont-mediated activation of host NF-kappaB cascade"/>
    <property type="evidence" value="ECO:0007669"/>
    <property type="project" value="UniProtKB-UniRule"/>
</dbReference>
<dbReference type="GO" id="GO:0039592">
    <property type="term" value="P:symbiont-mediated arrest of host cell cycle during G2/M transition"/>
    <property type="evidence" value="ECO:0007669"/>
    <property type="project" value="UniProtKB-UniRule"/>
</dbReference>
<dbReference type="GO" id="GO:0019079">
    <property type="term" value="P:viral genome replication"/>
    <property type="evidence" value="ECO:0007669"/>
    <property type="project" value="UniProtKB-UniRule"/>
</dbReference>
<dbReference type="HAMAP" id="MF_04074">
    <property type="entry name" value="HBV_X"/>
    <property type="match status" value="1"/>
</dbReference>
<dbReference type="InterPro" id="IPR000236">
    <property type="entry name" value="Transactivation_prot_X"/>
</dbReference>
<dbReference type="Pfam" id="PF00739">
    <property type="entry name" value="X"/>
    <property type="match status" value="1"/>
</dbReference>
<feature type="chain" id="PRO_0000322377" description="Protein X">
    <location>
        <begin position="1"/>
        <end position="145"/>
    </location>
</feature>
<feature type="region of interest" description="Mitochondrial targeting sequence" evidence="1">
    <location>
        <begin position="68"/>
        <end position="117"/>
    </location>
</feature>
<reference key="1">
    <citation type="journal article" date="1983" name="Nucleic Acids Res.">
        <title>The complete nucleotide sequences of the cloned hepatitis B virus DNA; subtype adr and adw.</title>
        <authorList>
            <person name="Ono Y."/>
            <person name="Onda H."/>
            <person name="Sasada R."/>
            <person name="Igarashi K."/>
            <person name="Sugino Y."/>
            <person name="Nishioka K."/>
        </authorList>
    </citation>
    <scope>NUCLEOTIDE SEQUENCE [GENOMIC DNA]</scope>
</reference>
<accession>P0C689</accession>
<gene>
    <name evidence="1" type="primary">X</name>
</gene>
<name>X_HBVC5</name>
<comment type="function">
    <text evidence="1">Multifunctional protein that plays a role in silencing host antiviral defenses and promoting viral transcription. Does not seem to be essential for HBV infection. May be directly involved in development of cirrhosis and liver cancer (hepatocellular carcinoma). Most of cytosolic activities involve modulation of cytosolic calcium. The effect on apoptosis is controversial depending on the cell types in which the studies have been conducted. May induce apoptosis by localizing in mitochondria and causing loss of mitochondrial membrane potential. May also modulate apoptosis by binding host CFLAR, a key regulator of the death-inducing signaling complex (DISC). Promotes viral transcription by using the host E3 ubiquitin ligase DDB1 to target the SMC5-SMC6 complex to proteasomal degradation. This host complex would otherwise bind to viral episomal DNA, and prevents its transcription. Moderately stimulates transcription of many different viral and cellular transcription elements. Promoters and enhancers stimulated by HBx contain DNA binding sites for NF-kappa-B, AP-1, AP-2, c-EBP, ATF/CREB, or the calcium-activated factor NF-AT.</text>
</comment>
<comment type="subunit">
    <text evidence="1">May form homodimer. May interact with host CEBPA, CFLAR, CREB1, DDB1, E4F1, HBXIP, HSPD1/HSP60, NFKBIA, POLR2E and SMAD4. Interacts with host SMC5-SMC6 complex and induces its degradation. Interacts with host TRPC4AP; leading to prevent ubiquitination of TRPC4AP. Interacts with host PLSCR1; this interaction promotes ubiquitination and degradation of HBx and impairs HBx-mediated cell proliferation.</text>
</comment>
<comment type="subcellular location">
    <subcellularLocation>
        <location evidence="1">Host cytoplasm</location>
    </subcellularLocation>
    <subcellularLocation>
        <location evidence="1">Host nucleus</location>
    </subcellularLocation>
    <subcellularLocation>
        <location evidence="1">Host mitochondrion</location>
    </subcellularLocation>
    <text evidence="1">Mainly cytoplasmic as only a fraction is detected in the nucleus. In cytoplasm, a minor fraction associates with mitochondria or proteasomes.</text>
</comment>
<comment type="PTM">
    <text evidence="1">A fraction may be phosphorylated in insect cells and HepG2 cells, a human hepatoblastoma cell line. Phosphorylated in vitro by host protein kinase C or mitogen-activated protein kinase. N-acetylated in insect cells.</text>
</comment>
<comment type="similarity">
    <text evidence="1">Belongs to the orthohepadnavirus protein X family.</text>
</comment>
<comment type="caution">
    <text>Transcriptional activities should be taken with a grain of salt. As of 2007, all studies demonstrating in vivo interaction between protein X and transcriptional components were performed with significant overexpression of both proteins and in the absence of viral infection.</text>
</comment>